<dbReference type="EMBL" id="CP001010">
    <property type="protein sequence ID" value="ACB44268.1"/>
    <property type="molecule type" value="Genomic_DNA"/>
</dbReference>
<dbReference type="SMR" id="B1XV91"/>
<dbReference type="STRING" id="452638.Pnec_1095"/>
<dbReference type="KEGG" id="pne:Pnec_1095"/>
<dbReference type="eggNOG" id="COG0779">
    <property type="taxonomic scope" value="Bacteria"/>
</dbReference>
<dbReference type="HOGENOM" id="CLU_070525_1_0_4"/>
<dbReference type="OrthoDB" id="9805006at2"/>
<dbReference type="GO" id="GO:0005829">
    <property type="term" value="C:cytosol"/>
    <property type="evidence" value="ECO:0007669"/>
    <property type="project" value="TreeGrafter"/>
</dbReference>
<dbReference type="GO" id="GO:0000028">
    <property type="term" value="P:ribosomal small subunit assembly"/>
    <property type="evidence" value="ECO:0007669"/>
    <property type="project" value="TreeGrafter"/>
</dbReference>
<dbReference type="GO" id="GO:0006412">
    <property type="term" value="P:translation"/>
    <property type="evidence" value="ECO:0007669"/>
    <property type="project" value="TreeGrafter"/>
</dbReference>
<dbReference type="CDD" id="cd01734">
    <property type="entry name" value="YlxS_C"/>
    <property type="match status" value="1"/>
</dbReference>
<dbReference type="Gene3D" id="3.30.300.70">
    <property type="entry name" value="RimP-like superfamily, N-terminal"/>
    <property type="match status" value="1"/>
</dbReference>
<dbReference type="HAMAP" id="MF_01077">
    <property type="entry name" value="RimP"/>
    <property type="match status" value="1"/>
</dbReference>
<dbReference type="InterPro" id="IPR003728">
    <property type="entry name" value="Ribosome_maturation_RimP"/>
</dbReference>
<dbReference type="InterPro" id="IPR028998">
    <property type="entry name" value="RimP_C"/>
</dbReference>
<dbReference type="InterPro" id="IPR036847">
    <property type="entry name" value="RimP_C_sf"/>
</dbReference>
<dbReference type="InterPro" id="IPR028989">
    <property type="entry name" value="RimP_N"/>
</dbReference>
<dbReference type="InterPro" id="IPR035956">
    <property type="entry name" value="RimP_N_sf"/>
</dbReference>
<dbReference type="NCBIfam" id="NF000929">
    <property type="entry name" value="PRK00092.2-1"/>
    <property type="match status" value="1"/>
</dbReference>
<dbReference type="PANTHER" id="PTHR33867">
    <property type="entry name" value="RIBOSOME MATURATION FACTOR RIMP"/>
    <property type="match status" value="1"/>
</dbReference>
<dbReference type="PANTHER" id="PTHR33867:SF1">
    <property type="entry name" value="RIBOSOME MATURATION FACTOR RIMP"/>
    <property type="match status" value="1"/>
</dbReference>
<dbReference type="Pfam" id="PF17384">
    <property type="entry name" value="DUF150_C"/>
    <property type="match status" value="1"/>
</dbReference>
<dbReference type="Pfam" id="PF02576">
    <property type="entry name" value="RimP_N"/>
    <property type="match status" value="1"/>
</dbReference>
<dbReference type="SUPFAM" id="SSF74942">
    <property type="entry name" value="YhbC-like, C-terminal domain"/>
    <property type="match status" value="1"/>
</dbReference>
<dbReference type="SUPFAM" id="SSF75420">
    <property type="entry name" value="YhbC-like, N-terminal domain"/>
    <property type="match status" value="1"/>
</dbReference>
<proteinExistence type="inferred from homology"/>
<name>RIMP_POLNS</name>
<sequence>MKEQQVISAELENLGYSLVEIEREAGGLLRVTIENPDYERLITVLDCEKVSHQLSYTLPVENIPYERLEISSPGLDRPVKSAADFQRFAGMEVDLKLRVAAGNRKNFRGELQGLLSGELNSPDAKFGLVFEGADGQSSQLEFSLAEVDKTRLVPVIDFKGRKS</sequence>
<reference key="1">
    <citation type="journal article" date="2013" name="Proc. Natl. Acad. Sci. U.S.A.">
        <title>Polynucleobacter necessarius, a model for genome reduction in both free-living and symbiotic bacteria.</title>
        <authorList>
            <person name="Boscaro V."/>
            <person name="Felletti M."/>
            <person name="Vannini C."/>
            <person name="Ackerman M.S."/>
            <person name="Chain P.S."/>
            <person name="Malfatti S."/>
            <person name="Vergez L.M."/>
            <person name="Shin M."/>
            <person name="Doak T.G."/>
            <person name="Lynch M."/>
            <person name="Petroni G."/>
        </authorList>
    </citation>
    <scope>NUCLEOTIDE SEQUENCE [LARGE SCALE GENOMIC DNA]</scope>
    <source>
        <strain>STIR1</strain>
    </source>
</reference>
<feature type="chain" id="PRO_1000136785" description="Ribosome maturation factor RimP">
    <location>
        <begin position="1"/>
        <end position="163"/>
    </location>
</feature>
<organism>
    <name type="scientific">Polynucleobacter necessarius subsp. necessarius (strain STIR1)</name>
    <dbReference type="NCBI Taxonomy" id="452638"/>
    <lineage>
        <taxon>Bacteria</taxon>
        <taxon>Pseudomonadati</taxon>
        <taxon>Pseudomonadota</taxon>
        <taxon>Betaproteobacteria</taxon>
        <taxon>Burkholderiales</taxon>
        <taxon>Burkholderiaceae</taxon>
        <taxon>Polynucleobacter</taxon>
    </lineage>
</organism>
<protein>
    <recommendedName>
        <fullName evidence="1">Ribosome maturation factor RimP</fullName>
    </recommendedName>
</protein>
<gene>
    <name evidence="1" type="primary">rimP</name>
    <name type="ordered locus">Pnec_1095</name>
</gene>
<comment type="function">
    <text evidence="1">Required for maturation of 30S ribosomal subunits.</text>
</comment>
<comment type="subcellular location">
    <subcellularLocation>
        <location evidence="1">Cytoplasm</location>
    </subcellularLocation>
</comment>
<comment type="similarity">
    <text evidence="1">Belongs to the RimP family.</text>
</comment>
<keyword id="KW-0963">Cytoplasm</keyword>
<keyword id="KW-0690">Ribosome biogenesis</keyword>
<accession>B1XV91</accession>
<evidence type="ECO:0000255" key="1">
    <source>
        <dbReference type="HAMAP-Rule" id="MF_01077"/>
    </source>
</evidence>